<organism>
    <name type="scientific">Nocardia farcinica (strain IFM 10152)</name>
    <dbReference type="NCBI Taxonomy" id="247156"/>
    <lineage>
        <taxon>Bacteria</taxon>
        <taxon>Bacillati</taxon>
        <taxon>Actinomycetota</taxon>
        <taxon>Actinomycetes</taxon>
        <taxon>Mycobacteriales</taxon>
        <taxon>Nocardiaceae</taxon>
        <taxon>Nocardia</taxon>
    </lineage>
</organism>
<feature type="chain" id="PRO_0000142028" description="1-(5-phosphoribosyl)-5-[(5-phosphoribosylamino)methylideneamino] imidazole-4-carboxamide isomerase">
    <location>
        <begin position="1"/>
        <end position="243"/>
    </location>
</feature>
<feature type="active site" description="Proton acceptor" evidence="1">
    <location>
        <position position="10"/>
    </location>
</feature>
<feature type="active site" description="Proton donor" evidence="1">
    <location>
        <position position="129"/>
    </location>
</feature>
<comment type="catalytic activity">
    <reaction evidence="1">
        <text>1-(5-phospho-beta-D-ribosyl)-5-[(5-phospho-beta-D-ribosylamino)methylideneamino]imidazole-4-carboxamide = 5-[(5-phospho-1-deoxy-D-ribulos-1-ylimino)methylamino]-1-(5-phospho-beta-D-ribosyl)imidazole-4-carboxamide</text>
        <dbReference type="Rhea" id="RHEA:15469"/>
        <dbReference type="ChEBI" id="CHEBI:58435"/>
        <dbReference type="ChEBI" id="CHEBI:58525"/>
        <dbReference type="EC" id="5.3.1.16"/>
    </reaction>
</comment>
<comment type="pathway">
    <text evidence="1">Amino-acid biosynthesis; L-histidine biosynthesis; L-histidine from 5-phospho-alpha-D-ribose 1-diphosphate: step 4/9.</text>
</comment>
<comment type="subcellular location">
    <subcellularLocation>
        <location evidence="1">Cytoplasm</location>
    </subcellularLocation>
</comment>
<comment type="similarity">
    <text evidence="1">Belongs to the HisA/HisF family.</text>
</comment>
<keyword id="KW-0028">Amino-acid biosynthesis</keyword>
<keyword id="KW-0963">Cytoplasm</keyword>
<keyword id="KW-0368">Histidine biosynthesis</keyword>
<keyword id="KW-0413">Isomerase</keyword>
<keyword id="KW-1185">Reference proteome</keyword>
<proteinExistence type="inferred from homology"/>
<protein>
    <recommendedName>
        <fullName evidence="1">1-(5-phosphoribosyl)-5-[(5-phosphoribosylamino)methylideneamino] imidazole-4-carboxamide isomerase</fullName>
        <ecNumber evidence="1">5.3.1.16</ecNumber>
    </recommendedName>
    <alternativeName>
        <fullName evidence="1">Phosphoribosylformimino-5-aminoimidazole carboxamide ribotide isomerase</fullName>
    </alternativeName>
</protein>
<evidence type="ECO:0000255" key="1">
    <source>
        <dbReference type="HAMAP-Rule" id="MF_01014"/>
    </source>
</evidence>
<accession>Q5YYP5</accession>
<gene>
    <name evidence="1" type="primary">hisA</name>
    <name type="ordered locus">NFA_18500</name>
</gene>
<name>HIS4_NOCFA</name>
<reference key="1">
    <citation type="journal article" date="2004" name="Proc. Natl. Acad. Sci. U.S.A.">
        <title>The complete genomic sequence of Nocardia farcinica IFM 10152.</title>
        <authorList>
            <person name="Ishikawa J."/>
            <person name="Yamashita A."/>
            <person name="Mikami Y."/>
            <person name="Hoshino Y."/>
            <person name="Kurita H."/>
            <person name="Hotta K."/>
            <person name="Shiba T."/>
            <person name="Hattori M."/>
        </authorList>
    </citation>
    <scope>NUCLEOTIDE SEQUENCE [LARGE SCALE GENOMIC DNA]</scope>
    <source>
        <strain>IFM 10152</strain>
    </source>
</reference>
<dbReference type="EC" id="5.3.1.16" evidence="1"/>
<dbReference type="EMBL" id="AP006618">
    <property type="protein sequence ID" value="BAD56696.1"/>
    <property type="molecule type" value="Genomic_DNA"/>
</dbReference>
<dbReference type="SMR" id="Q5YYP5"/>
<dbReference type="STRING" id="247156.NFA_18500"/>
<dbReference type="GeneID" id="61132634"/>
<dbReference type="KEGG" id="nfa:NFA_18500"/>
<dbReference type="eggNOG" id="COG0106">
    <property type="taxonomic scope" value="Bacteria"/>
</dbReference>
<dbReference type="HOGENOM" id="CLU_048577_1_1_11"/>
<dbReference type="OrthoDB" id="9807749at2"/>
<dbReference type="UniPathway" id="UPA00031">
    <property type="reaction ID" value="UER00009"/>
</dbReference>
<dbReference type="Proteomes" id="UP000006820">
    <property type="component" value="Chromosome"/>
</dbReference>
<dbReference type="GO" id="GO:0005737">
    <property type="term" value="C:cytoplasm"/>
    <property type="evidence" value="ECO:0007669"/>
    <property type="project" value="UniProtKB-SubCell"/>
</dbReference>
<dbReference type="GO" id="GO:0003949">
    <property type="term" value="F:1-(5-phosphoribosyl)-5-[(5-phosphoribosylamino)methylideneamino]imidazole-4-carboxamide isomerase activity"/>
    <property type="evidence" value="ECO:0007669"/>
    <property type="project" value="UniProtKB-UniRule"/>
</dbReference>
<dbReference type="GO" id="GO:0004640">
    <property type="term" value="F:phosphoribosylanthranilate isomerase activity"/>
    <property type="evidence" value="ECO:0007669"/>
    <property type="project" value="InterPro"/>
</dbReference>
<dbReference type="GO" id="GO:0000105">
    <property type="term" value="P:L-histidine biosynthetic process"/>
    <property type="evidence" value="ECO:0007669"/>
    <property type="project" value="UniProtKB-UniRule"/>
</dbReference>
<dbReference type="GO" id="GO:0000162">
    <property type="term" value="P:L-tryptophan biosynthetic process"/>
    <property type="evidence" value="ECO:0007669"/>
    <property type="project" value="InterPro"/>
</dbReference>
<dbReference type="CDD" id="cd04732">
    <property type="entry name" value="HisA"/>
    <property type="match status" value="1"/>
</dbReference>
<dbReference type="FunFam" id="3.20.20.70:FF:000009">
    <property type="entry name" value="1-(5-phosphoribosyl)-5-[(5-phosphoribosylamino)methylideneamino] imidazole-4-carboxamide isomerase"/>
    <property type="match status" value="1"/>
</dbReference>
<dbReference type="Gene3D" id="3.20.20.70">
    <property type="entry name" value="Aldolase class I"/>
    <property type="match status" value="1"/>
</dbReference>
<dbReference type="HAMAP" id="MF_01014">
    <property type="entry name" value="HisA"/>
    <property type="match status" value="1"/>
</dbReference>
<dbReference type="InterPro" id="IPR013785">
    <property type="entry name" value="Aldolase_TIM"/>
</dbReference>
<dbReference type="InterPro" id="IPR006062">
    <property type="entry name" value="His_biosynth"/>
</dbReference>
<dbReference type="InterPro" id="IPR010188">
    <property type="entry name" value="HisA/PriA_Actinobacteria"/>
</dbReference>
<dbReference type="InterPro" id="IPR044524">
    <property type="entry name" value="Isoase_HisA-like"/>
</dbReference>
<dbReference type="InterPro" id="IPR023016">
    <property type="entry name" value="Isoase_HisA-like_bact"/>
</dbReference>
<dbReference type="InterPro" id="IPR011060">
    <property type="entry name" value="RibuloseP-bd_barrel"/>
</dbReference>
<dbReference type="NCBIfam" id="TIGR01919">
    <property type="entry name" value="hisA-trpF"/>
    <property type="match status" value="1"/>
</dbReference>
<dbReference type="PANTHER" id="PTHR43090">
    <property type="entry name" value="1-(5-PHOSPHORIBOSYL)-5-[(5-PHOSPHORIBOSYLAMINO)METHYLIDENEAMINO] IMIDAZOLE-4-CARBOXAMIDE ISOMERASE"/>
    <property type="match status" value="1"/>
</dbReference>
<dbReference type="PANTHER" id="PTHR43090:SF2">
    <property type="entry name" value="1-(5-PHOSPHORIBOSYL)-5-[(5-PHOSPHORIBOSYLAMINO)METHYLIDENEAMINO] IMIDAZOLE-4-CARBOXAMIDE ISOMERASE"/>
    <property type="match status" value="1"/>
</dbReference>
<dbReference type="Pfam" id="PF00977">
    <property type="entry name" value="His_biosynth"/>
    <property type="match status" value="1"/>
</dbReference>
<dbReference type="SUPFAM" id="SSF51366">
    <property type="entry name" value="Ribulose-phoshate binding barrel"/>
    <property type="match status" value="1"/>
</dbReference>
<sequence length="243" mass="25388">MSLVLLPAVDVANGEAVRLVQGEAGSETSYGSPRDAALAWQEAGAEWVHLVDLDAAFGRGSNRELLAKVVGELDVKVELSGGIRDDDSLEAALATGCARVNLGTAALEDPQWCARAIAKHGERIAVGLDVRIIDGDYRLRGRGWVSDGGDLWEVLERLERDGCSRYVVTDVTKDGTLTGPNLELLSEVCAATEAPVIASGGVSAIEDLVAIAGLVPEGVEGAIVGKALYAGRFTLPEALAAVR</sequence>